<proteinExistence type="inferred from homology"/>
<feature type="chain" id="PRO_0000394536" description="Putative thioredoxin H10">
    <location>
        <begin position="1"/>
        <end position="154"/>
    </location>
</feature>
<feature type="domain" description="Thioredoxin" evidence="3">
    <location>
        <begin position="24"/>
        <end position="148"/>
    </location>
</feature>
<feature type="active site" description="Nucleophile" evidence="2">
    <location>
        <position position="74"/>
    </location>
</feature>
<feature type="active site" description="Nucleophile" evidence="2">
    <location>
        <position position="77"/>
    </location>
</feature>
<feature type="disulfide bond" description="Redox-active" evidence="3">
    <location>
        <begin position="74"/>
        <end position="77"/>
    </location>
</feature>
<sequence>MGNRCARTSCCRKLWSCICCCSNNNNNSYGQTRSQHGSKGKVHPVSRIEKWEEKITEANNHGKILVVNFSAPWCVPCKKIEPVFRDLASRYPSMIFVTVDVEELAEFSNEWNVEATPTVVFLKDGRQMDKLVGAETSELQKKTAAAADLFLRKP</sequence>
<reference key="1">
    <citation type="journal article" date="2000" name="Nature">
        <title>Sequence and analysis of chromosome 3 of the plant Arabidopsis thaliana.</title>
        <authorList>
            <person name="Salanoubat M."/>
            <person name="Lemcke K."/>
            <person name="Rieger M."/>
            <person name="Ansorge W."/>
            <person name="Unseld M."/>
            <person name="Fartmann B."/>
            <person name="Valle G."/>
            <person name="Bloecker H."/>
            <person name="Perez-Alonso M."/>
            <person name="Obermaier B."/>
            <person name="Delseny M."/>
            <person name="Boutry M."/>
            <person name="Grivell L.A."/>
            <person name="Mache R."/>
            <person name="Puigdomenech P."/>
            <person name="De Simone V."/>
            <person name="Choisne N."/>
            <person name="Artiguenave F."/>
            <person name="Robert C."/>
            <person name="Brottier P."/>
            <person name="Wincker P."/>
            <person name="Cattolico L."/>
            <person name="Weissenbach J."/>
            <person name="Saurin W."/>
            <person name="Quetier F."/>
            <person name="Schaefer M."/>
            <person name="Mueller-Auer S."/>
            <person name="Gabel C."/>
            <person name="Fuchs M."/>
            <person name="Benes V."/>
            <person name="Wurmbach E."/>
            <person name="Drzonek H."/>
            <person name="Erfle H."/>
            <person name="Jordan N."/>
            <person name="Bangert S."/>
            <person name="Wiedelmann R."/>
            <person name="Kranz H."/>
            <person name="Voss H."/>
            <person name="Holland R."/>
            <person name="Brandt P."/>
            <person name="Nyakatura G."/>
            <person name="Vezzi A."/>
            <person name="D'Angelo M."/>
            <person name="Pallavicini A."/>
            <person name="Toppo S."/>
            <person name="Simionati B."/>
            <person name="Conrad A."/>
            <person name="Hornischer K."/>
            <person name="Kauer G."/>
            <person name="Loehnert T.-H."/>
            <person name="Nordsiek G."/>
            <person name="Reichelt J."/>
            <person name="Scharfe M."/>
            <person name="Schoen O."/>
            <person name="Bargues M."/>
            <person name="Terol J."/>
            <person name="Climent J."/>
            <person name="Navarro P."/>
            <person name="Collado C."/>
            <person name="Perez-Perez A."/>
            <person name="Ottenwaelder B."/>
            <person name="Duchemin D."/>
            <person name="Cooke R."/>
            <person name="Laudie M."/>
            <person name="Berger-Llauro C."/>
            <person name="Purnelle B."/>
            <person name="Masuy D."/>
            <person name="de Haan M."/>
            <person name="Maarse A.C."/>
            <person name="Alcaraz J.-P."/>
            <person name="Cottet A."/>
            <person name="Casacuberta E."/>
            <person name="Monfort A."/>
            <person name="Argiriou A."/>
            <person name="Flores M."/>
            <person name="Liguori R."/>
            <person name="Vitale D."/>
            <person name="Mannhaupt G."/>
            <person name="Haase D."/>
            <person name="Schoof H."/>
            <person name="Rudd S."/>
            <person name="Zaccaria P."/>
            <person name="Mewes H.-W."/>
            <person name="Mayer K.F.X."/>
            <person name="Kaul S."/>
            <person name="Town C.D."/>
            <person name="Koo H.L."/>
            <person name="Tallon L.J."/>
            <person name="Jenkins J."/>
            <person name="Rooney T."/>
            <person name="Rizzo M."/>
            <person name="Walts A."/>
            <person name="Utterback T."/>
            <person name="Fujii C.Y."/>
            <person name="Shea T.P."/>
            <person name="Creasy T.H."/>
            <person name="Haas B."/>
            <person name="Maiti R."/>
            <person name="Wu D."/>
            <person name="Peterson J."/>
            <person name="Van Aken S."/>
            <person name="Pai G."/>
            <person name="Militscher J."/>
            <person name="Sellers P."/>
            <person name="Gill J.E."/>
            <person name="Feldblyum T.V."/>
            <person name="Preuss D."/>
            <person name="Lin X."/>
            <person name="Nierman W.C."/>
            <person name="Salzberg S.L."/>
            <person name="White O."/>
            <person name="Venter J.C."/>
            <person name="Fraser C.M."/>
            <person name="Kaneko T."/>
            <person name="Nakamura Y."/>
            <person name="Sato S."/>
            <person name="Kato T."/>
            <person name="Asamizu E."/>
            <person name="Sasamoto S."/>
            <person name="Kimura T."/>
            <person name="Idesawa K."/>
            <person name="Kawashima K."/>
            <person name="Kishida Y."/>
            <person name="Kiyokawa C."/>
            <person name="Kohara M."/>
            <person name="Matsumoto M."/>
            <person name="Matsuno A."/>
            <person name="Muraki A."/>
            <person name="Nakayama S."/>
            <person name="Nakazaki N."/>
            <person name="Shinpo S."/>
            <person name="Takeuchi C."/>
            <person name="Wada T."/>
            <person name="Watanabe A."/>
            <person name="Yamada M."/>
            <person name="Yasuda M."/>
            <person name="Tabata S."/>
        </authorList>
    </citation>
    <scope>NUCLEOTIDE SEQUENCE [LARGE SCALE GENOMIC DNA]</scope>
    <source>
        <strain>cv. Columbia</strain>
    </source>
</reference>
<reference key="2">
    <citation type="journal article" date="2017" name="Plant J.">
        <title>Araport11: a complete reannotation of the Arabidopsis thaliana reference genome.</title>
        <authorList>
            <person name="Cheng C.Y."/>
            <person name="Krishnakumar V."/>
            <person name="Chan A.P."/>
            <person name="Thibaud-Nissen F."/>
            <person name="Schobel S."/>
            <person name="Town C.D."/>
        </authorList>
    </citation>
    <scope>GENOME REANNOTATION</scope>
    <source>
        <strain>cv. Columbia</strain>
    </source>
</reference>
<reference key="3">
    <citation type="journal article" date="2009" name="Mol. Plant">
        <title>Comparative genomic study of the thioredoxin family in photosynthetic organisms with emphasis on Populus trichocarpa.</title>
        <authorList>
            <person name="Chibani K."/>
            <person name="Wingsle G."/>
            <person name="Jacquot J.P."/>
            <person name="Gelhaye E."/>
            <person name="Rouhier N."/>
        </authorList>
    </citation>
    <scope>GENE FAMILY</scope>
    <scope>NOMENCLATURE</scope>
</reference>
<dbReference type="EMBL" id="AL163972">
    <property type="protein sequence ID" value="CAB88045.1"/>
    <property type="status" value="ALT_SEQ"/>
    <property type="molecule type" value="Genomic_DNA"/>
</dbReference>
<dbReference type="EMBL" id="CP002686">
    <property type="protein sequence ID" value="AEE79520.1"/>
    <property type="molecule type" value="Genomic_DNA"/>
</dbReference>
<dbReference type="EMBL" id="CP002686">
    <property type="protein sequence ID" value="ANM63775.1"/>
    <property type="molecule type" value="Genomic_DNA"/>
</dbReference>
<dbReference type="EMBL" id="CP002686">
    <property type="protein sequence ID" value="ANM63776.1"/>
    <property type="molecule type" value="Genomic_DNA"/>
</dbReference>
<dbReference type="PIR" id="T49043">
    <property type="entry name" value="T49043"/>
</dbReference>
<dbReference type="RefSeq" id="NP_001325846.1">
    <property type="nucleotide sequence ID" value="NM_001339795.1"/>
</dbReference>
<dbReference type="RefSeq" id="NP_001325847.1">
    <property type="nucleotide sequence ID" value="NM_001339794.1"/>
</dbReference>
<dbReference type="RefSeq" id="NP_191201.4">
    <property type="nucleotide sequence ID" value="NM_115500.4"/>
</dbReference>
<dbReference type="SMR" id="Q9LXZ8"/>
<dbReference type="FunCoup" id="Q9LXZ8">
    <property type="interactions" value="1114"/>
</dbReference>
<dbReference type="STRING" id="3702.Q9LXZ8"/>
<dbReference type="PaxDb" id="3702-AT3G56420.1"/>
<dbReference type="ProteomicsDB" id="228306"/>
<dbReference type="EnsemblPlants" id="AT3G56420.1">
    <property type="protein sequence ID" value="AT3G56420.1"/>
    <property type="gene ID" value="AT3G56420"/>
</dbReference>
<dbReference type="EnsemblPlants" id="AT3G56420.2">
    <property type="protein sequence ID" value="AT3G56420.2"/>
    <property type="gene ID" value="AT3G56420"/>
</dbReference>
<dbReference type="EnsemblPlants" id="AT3G56420.3">
    <property type="protein sequence ID" value="AT3G56420.3"/>
    <property type="gene ID" value="AT3G56420"/>
</dbReference>
<dbReference type="GeneID" id="824809"/>
<dbReference type="Gramene" id="AT3G56420.1">
    <property type="protein sequence ID" value="AT3G56420.1"/>
    <property type="gene ID" value="AT3G56420"/>
</dbReference>
<dbReference type="Gramene" id="AT3G56420.2">
    <property type="protein sequence ID" value="AT3G56420.2"/>
    <property type="gene ID" value="AT3G56420"/>
</dbReference>
<dbReference type="Gramene" id="AT3G56420.3">
    <property type="protein sequence ID" value="AT3G56420.3"/>
    <property type="gene ID" value="AT3G56420"/>
</dbReference>
<dbReference type="KEGG" id="ath:AT3G56420"/>
<dbReference type="Araport" id="AT3G56420"/>
<dbReference type="TAIR" id="AT3G56420"/>
<dbReference type="eggNOG" id="KOG0907">
    <property type="taxonomic scope" value="Eukaryota"/>
</dbReference>
<dbReference type="HOGENOM" id="CLU_090389_14_1_1"/>
<dbReference type="InParanoid" id="Q9LXZ8"/>
<dbReference type="OMA" id="VCLVKSM"/>
<dbReference type="OrthoDB" id="2121326at2759"/>
<dbReference type="PhylomeDB" id="Q9LXZ8"/>
<dbReference type="PRO" id="PR:Q9LXZ8"/>
<dbReference type="Proteomes" id="UP000006548">
    <property type="component" value="Chromosome 3"/>
</dbReference>
<dbReference type="ExpressionAtlas" id="Q9LXZ8">
    <property type="expression patterns" value="baseline and differential"/>
</dbReference>
<dbReference type="GO" id="GO:0005737">
    <property type="term" value="C:cytoplasm"/>
    <property type="evidence" value="ECO:0007669"/>
    <property type="project" value="UniProtKB-SubCell"/>
</dbReference>
<dbReference type="CDD" id="cd02947">
    <property type="entry name" value="TRX_family"/>
    <property type="match status" value="1"/>
</dbReference>
<dbReference type="Gene3D" id="3.40.30.10">
    <property type="entry name" value="Glutaredoxin"/>
    <property type="match status" value="1"/>
</dbReference>
<dbReference type="InterPro" id="IPR036249">
    <property type="entry name" value="Thioredoxin-like_sf"/>
</dbReference>
<dbReference type="InterPro" id="IPR017937">
    <property type="entry name" value="Thioredoxin_CS"/>
</dbReference>
<dbReference type="InterPro" id="IPR013766">
    <property type="entry name" value="Thioredoxin_domain"/>
</dbReference>
<dbReference type="InterPro" id="IPR050620">
    <property type="entry name" value="Thioredoxin_H-type-like"/>
</dbReference>
<dbReference type="PANTHER" id="PTHR10438">
    <property type="entry name" value="THIOREDOXIN"/>
    <property type="match status" value="1"/>
</dbReference>
<dbReference type="PANTHER" id="PTHR10438:SF394">
    <property type="entry name" value="THIOREDOXIN-LIKE PROTEIN CXXS2-RELATED"/>
    <property type="match status" value="1"/>
</dbReference>
<dbReference type="Pfam" id="PF00085">
    <property type="entry name" value="Thioredoxin"/>
    <property type="match status" value="1"/>
</dbReference>
<dbReference type="PRINTS" id="PR00421">
    <property type="entry name" value="THIOREDOXIN"/>
</dbReference>
<dbReference type="SUPFAM" id="SSF52833">
    <property type="entry name" value="Thioredoxin-like"/>
    <property type="match status" value="1"/>
</dbReference>
<dbReference type="PROSITE" id="PS00194">
    <property type="entry name" value="THIOREDOXIN_1"/>
    <property type="match status" value="1"/>
</dbReference>
<dbReference type="PROSITE" id="PS51352">
    <property type="entry name" value="THIOREDOXIN_2"/>
    <property type="match status" value="1"/>
</dbReference>
<accession>Q9LXZ8</accession>
<accession>A0A1I9LMG8</accession>
<organism>
    <name type="scientific">Arabidopsis thaliana</name>
    <name type="common">Mouse-ear cress</name>
    <dbReference type="NCBI Taxonomy" id="3702"/>
    <lineage>
        <taxon>Eukaryota</taxon>
        <taxon>Viridiplantae</taxon>
        <taxon>Streptophyta</taxon>
        <taxon>Embryophyta</taxon>
        <taxon>Tracheophyta</taxon>
        <taxon>Spermatophyta</taxon>
        <taxon>Magnoliopsida</taxon>
        <taxon>eudicotyledons</taxon>
        <taxon>Gunneridae</taxon>
        <taxon>Pentapetalae</taxon>
        <taxon>rosids</taxon>
        <taxon>malvids</taxon>
        <taxon>Brassicales</taxon>
        <taxon>Brassicaceae</taxon>
        <taxon>Camelineae</taxon>
        <taxon>Arabidopsis</taxon>
    </lineage>
</organism>
<name>TRH10_ARATH</name>
<protein>
    <recommendedName>
        <fullName>Putative thioredoxin H10</fullName>
        <shortName>AtTrxh10</shortName>
    </recommendedName>
</protein>
<comment type="function">
    <text>Probable thiol-disulfide oxidoreductase that may be involved in the redox regulation of a number of cytosolic enzymes.</text>
</comment>
<comment type="subcellular location">
    <subcellularLocation>
        <location evidence="1">Cytoplasm</location>
    </subcellularLocation>
</comment>
<comment type="similarity">
    <text evidence="4">Belongs to the thioredoxin family.</text>
</comment>
<comment type="caution">
    <text evidence="4">The active site contains a CVPC motif which differs from the conserved CGPC motif.</text>
</comment>
<comment type="sequence caution" evidence="4">
    <conflict type="erroneous gene model prediction">
        <sequence resource="EMBL-CDS" id="CAB88045"/>
    </conflict>
</comment>
<evidence type="ECO:0000250" key="1"/>
<evidence type="ECO:0000255" key="2"/>
<evidence type="ECO:0000255" key="3">
    <source>
        <dbReference type="PROSITE-ProRule" id="PRU00691"/>
    </source>
</evidence>
<evidence type="ECO:0000305" key="4"/>
<gene>
    <name type="ordered locus">At3g56420</name>
    <name type="ORF">T5P19.70</name>
</gene>
<keyword id="KW-0963">Cytoplasm</keyword>
<keyword id="KW-1015">Disulfide bond</keyword>
<keyword id="KW-0249">Electron transport</keyword>
<keyword id="KW-0676">Redox-active center</keyword>
<keyword id="KW-1185">Reference proteome</keyword>
<keyword id="KW-0813">Transport</keyword>